<gene>
    <name evidence="1" type="primary">guaAB</name>
    <name type="ordered locus">Mpal_0069</name>
</gene>
<comment type="function">
    <text evidence="1">Catalyzes the synthesis of GMP from XMP.</text>
</comment>
<comment type="catalytic activity">
    <reaction evidence="1">
        <text>XMP + L-glutamine + ATP + H2O = GMP + L-glutamate + AMP + diphosphate + 2 H(+)</text>
        <dbReference type="Rhea" id="RHEA:11680"/>
        <dbReference type="ChEBI" id="CHEBI:15377"/>
        <dbReference type="ChEBI" id="CHEBI:15378"/>
        <dbReference type="ChEBI" id="CHEBI:29985"/>
        <dbReference type="ChEBI" id="CHEBI:30616"/>
        <dbReference type="ChEBI" id="CHEBI:33019"/>
        <dbReference type="ChEBI" id="CHEBI:57464"/>
        <dbReference type="ChEBI" id="CHEBI:58115"/>
        <dbReference type="ChEBI" id="CHEBI:58359"/>
        <dbReference type="ChEBI" id="CHEBI:456215"/>
        <dbReference type="EC" id="6.3.5.2"/>
    </reaction>
</comment>
<comment type="pathway">
    <text evidence="1">Purine metabolism; GMP biosynthesis; GMP from XMP (L-Gln route): step 1/1.</text>
</comment>
<comment type="subunit">
    <text evidence="1">Heterodimer composed of a glutamine amidotransferase subunit (A) and a GMP-binding subunit (B).</text>
</comment>
<sequence length="305" mass="33478">MVNTERFIQQAVSEIRELTADARVVMALSGGVDSSVCAALAAQAIGERLEPIYVDTGLMRKGETDRIRHLFGHLNLRIVDASDEFLDALAGVADPETKRKIIGERFIRVFEREAEKTGATVLLQGTIYPDRIESEGGIKSHHNVGGMPLGIAFTQVLEPLRDLYKDEVREVAGALGLPREIQHRMPFPGPGLAVRIIGEVTREKVAVIREANAITEEELVEEFRPWQCLAALVGLGTGVKGDIRLHGWIVAVRAVNSRDGMTADPLEVPYPVLFKIASRITAEIPSVARVVYDVTPKPPATIEYE</sequence>
<accession>B8GIB2</accession>
<organism>
    <name type="scientific">Methanosphaerula palustris (strain ATCC BAA-1556 / DSM 19958 / E1-9c)</name>
    <dbReference type="NCBI Taxonomy" id="521011"/>
    <lineage>
        <taxon>Archaea</taxon>
        <taxon>Methanobacteriati</taxon>
        <taxon>Methanobacteriota</taxon>
        <taxon>Stenosarchaea group</taxon>
        <taxon>Methanomicrobia</taxon>
        <taxon>Methanomicrobiales</taxon>
        <taxon>Methanoregulaceae</taxon>
        <taxon>Methanosphaerula</taxon>
    </lineage>
</organism>
<feature type="chain" id="PRO_1000133394" description="GMP synthase [glutamine-hydrolyzing] subunit B">
    <location>
        <begin position="1"/>
        <end position="305"/>
    </location>
</feature>
<feature type="domain" description="GMPS ATP-PPase" evidence="1">
    <location>
        <begin position="2"/>
        <end position="184"/>
    </location>
</feature>
<feature type="binding site" evidence="1">
    <location>
        <begin position="29"/>
        <end position="35"/>
    </location>
    <ligand>
        <name>ATP</name>
        <dbReference type="ChEBI" id="CHEBI:30616"/>
    </ligand>
</feature>
<name>GUAAB_METPE</name>
<evidence type="ECO:0000255" key="1">
    <source>
        <dbReference type="HAMAP-Rule" id="MF_00345"/>
    </source>
</evidence>
<proteinExistence type="inferred from homology"/>
<reference key="1">
    <citation type="journal article" date="2015" name="Genome Announc.">
        <title>Complete Genome Sequence of Methanosphaerula palustris E1-9CT, a Hydrogenotrophic Methanogen Isolated from a Minerotrophic Fen Peatland.</title>
        <authorList>
            <person name="Cadillo-Quiroz H."/>
            <person name="Browne P."/>
            <person name="Kyrpides N."/>
            <person name="Woyke T."/>
            <person name="Goodwin L."/>
            <person name="Detter C."/>
            <person name="Yavitt J.B."/>
            <person name="Zinder S.H."/>
        </authorList>
    </citation>
    <scope>NUCLEOTIDE SEQUENCE [LARGE SCALE GENOMIC DNA]</scope>
    <source>
        <strain>ATCC BAA-1556 / DSM 19958 / E1-9c</strain>
    </source>
</reference>
<keyword id="KW-0067">ATP-binding</keyword>
<keyword id="KW-0332">GMP biosynthesis</keyword>
<keyword id="KW-0436">Ligase</keyword>
<keyword id="KW-0547">Nucleotide-binding</keyword>
<keyword id="KW-0658">Purine biosynthesis</keyword>
<keyword id="KW-1185">Reference proteome</keyword>
<dbReference type="EC" id="6.3.5.2" evidence="1"/>
<dbReference type="EMBL" id="CP001338">
    <property type="protein sequence ID" value="ACL15463.1"/>
    <property type="molecule type" value="Genomic_DNA"/>
</dbReference>
<dbReference type="RefSeq" id="WP_012616782.1">
    <property type="nucleotide sequence ID" value="NC_011832.1"/>
</dbReference>
<dbReference type="SMR" id="B8GIB2"/>
<dbReference type="STRING" id="521011.Mpal_0069"/>
<dbReference type="GeneID" id="7272238"/>
<dbReference type="KEGG" id="mpl:Mpal_0069"/>
<dbReference type="eggNOG" id="arCOG00085">
    <property type="taxonomic scope" value="Archaea"/>
</dbReference>
<dbReference type="HOGENOM" id="CLU_014340_0_0_2"/>
<dbReference type="OrthoDB" id="33844at2157"/>
<dbReference type="UniPathway" id="UPA00189">
    <property type="reaction ID" value="UER00296"/>
</dbReference>
<dbReference type="Proteomes" id="UP000002457">
    <property type="component" value="Chromosome"/>
</dbReference>
<dbReference type="GO" id="GO:0005829">
    <property type="term" value="C:cytosol"/>
    <property type="evidence" value="ECO:0007669"/>
    <property type="project" value="TreeGrafter"/>
</dbReference>
<dbReference type="GO" id="GO:0004066">
    <property type="term" value="F:asparagine synthase (glutamine-hydrolyzing) activity"/>
    <property type="evidence" value="ECO:0007669"/>
    <property type="project" value="InterPro"/>
</dbReference>
<dbReference type="GO" id="GO:0005524">
    <property type="term" value="F:ATP binding"/>
    <property type="evidence" value="ECO:0007669"/>
    <property type="project" value="UniProtKB-UniRule"/>
</dbReference>
<dbReference type="GO" id="GO:0003921">
    <property type="term" value="F:GMP synthase activity"/>
    <property type="evidence" value="ECO:0007669"/>
    <property type="project" value="InterPro"/>
</dbReference>
<dbReference type="GO" id="GO:0006529">
    <property type="term" value="P:asparagine biosynthetic process"/>
    <property type="evidence" value="ECO:0007669"/>
    <property type="project" value="InterPro"/>
</dbReference>
<dbReference type="CDD" id="cd01997">
    <property type="entry name" value="GMP_synthase_C"/>
    <property type="match status" value="1"/>
</dbReference>
<dbReference type="Gene3D" id="3.30.300.10">
    <property type="match status" value="1"/>
</dbReference>
<dbReference type="Gene3D" id="3.40.50.620">
    <property type="entry name" value="HUPs"/>
    <property type="match status" value="1"/>
</dbReference>
<dbReference type="HAMAP" id="MF_00345">
    <property type="entry name" value="GMP_synthase_B"/>
    <property type="match status" value="1"/>
</dbReference>
<dbReference type="InterPro" id="IPR001962">
    <property type="entry name" value="Asn_synthase"/>
</dbReference>
<dbReference type="InterPro" id="IPR001674">
    <property type="entry name" value="GMP_synth_C"/>
</dbReference>
<dbReference type="InterPro" id="IPR026598">
    <property type="entry name" value="GMP_synthase_B"/>
</dbReference>
<dbReference type="InterPro" id="IPR025777">
    <property type="entry name" value="GMPS_ATP_PPase_dom"/>
</dbReference>
<dbReference type="InterPro" id="IPR014729">
    <property type="entry name" value="Rossmann-like_a/b/a_fold"/>
</dbReference>
<dbReference type="NCBIfam" id="TIGR00884">
    <property type="entry name" value="guaA_Cterm"/>
    <property type="match status" value="1"/>
</dbReference>
<dbReference type="PANTHER" id="PTHR11922:SF2">
    <property type="entry name" value="GMP SYNTHASE [GLUTAMINE-HYDROLYZING]"/>
    <property type="match status" value="1"/>
</dbReference>
<dbReference type="PANTHER" id="PTHR11922">
    <property type="entry name" value="GMP SYNTHASE-RELATED"/>
    <property type="match status" value="1"/>
</dbReference>
<dbReference type="Pfam" id="PF00733">
    <property type="entry name" value="Asn_synthase"/>
    <property type="match status" value="1"/>
</dbReference>
<dbReference type="Pfam" id="PF00958">
    <property type="entry name" value="GMP_synt_C"/>
    <property type="match status" value="1"/>
</dbReference>
<dbReference type="SUPFAM" id="SSF52402">
    <property type="entry name" value="Adenine nucleotide alpha hydrolases-like"/>
    <property type="match status" value="1"/>
</dbReference>
<dbReference type="SUPFAM" id="SSF54810">
    <property type="entry name" value="GMP synthetase C-terminal dimerisation domain"/>
    <property type="match status" value="1"/>
</dbReference>
<dbReference type="PROSITE" id="PS51553">
    <property type="entry name" value="GMPS_ATP_PPASE"/>
    <property type="match status" value="1"/>
</dbReference>
<protein>
    <recommendedName>
        <fullName evidence="1">GMP synthase [glutamine-hydrolyzing] subunit B</fullName>
        <ecNumber evidence="1">6.3.5.2</ecNumber>
    </recommendedName>
    <alternativeName>
        <fullName evidence="1">GMP synthetase</fullName>
    </alternativeName>
</protein>